<organism>
    <name type="scientific">Xylella fastidiosa (strain M12)</name>
    <dbReference type="NCBI Taxonomy" id="405440"/>
    <lineage>
        <taxon>Bacteria</taxon>
        <taxon>Pseudomonadati</taxon>
        <taxon>Pseudomonadota</taxon>
        <taxon>Gammaproteobacteria</taxon>
        <taxon>Lysobacterales</taxon>
        <taxon>Lysobacteraceae</taxon>
        <taxon>Xylella</taxon>
    </lineage>
</organism>
<feature type="chain" id="PRO_1000119889" description="ATP-dependent dethiobiotin synthetase BioD">
    <location>
        <begin position="1"/>
        <end position="226"/>
    </location>
</feature>
<feature type="active site" evidence="1">
    <location>
        <position position="39"/>
    </location>
</feature>
<feature type="binding site" evidence="1">
    <location>
        <begin position="14"/>
        <end position="19"/>
    </location>
    <ligand>
        <name>ATP</name>
        <dbReference type="ChEBI" id="CHEBI:30616"/>
    </ligand>
</feature>
<feature type="binding site" evidence="1">
    <location>
        <position position="18"/>
    </location>
    <ligand>
        <name>Mg(2+)</name>
        <dbReference type="ChEBI" id="CHEBI:18420"/>
    </ligand>
</feature>
<feature type="binding site" evidence="1">
    <location>
        <position position="43"/>
    </location>
    <ligand>
        <name>substrate</name>
    </ligand>
</feature>
<feature type="binding site" evidence="1">
    <location>
        <position position="56"/>
    </location>
    <ligand>
        <name>ATP</name>
        <dbReference type="ChEBI" id="CHEBI:30616"/>
    </ligand>
</feature>
<feature type="binding site" evidence="1">
    <location>
        <position position="56"/>
    </location>
    <ligand>
        <name>Mg(2+)</name>
        <dbReference type="ChEBI" id="CHEBI:18420"/>
    </ligand>
</feature>
<feature type="binding site" evidence="1">
    <location>
        <begin position="117"/>
        <end position="120"/>
    </location>
    <ligand>
        <name>ATP</name>
        <dbReference type="ChEBI" id="CHEBI:30616"/>
    </ligand>
</feature>
<feature type="binding site" evidence="1">
    <location>
        <position position="117"/>
    </location>
    <ligand>
        <name>Mg(2+)</name>
        <dbReference type="ChEBI" id="CHEBI:18420"/>
    </ligand>
</feature>
<feature type="binding site" evidence="1">
    <location>
        <begin position="177"/>
        <end position="178"/>
    </location>
    <ligand>
        <name>ATP</name>
        <dbReference type="ChEBI" id="CHEBI:30616"/>
    </ligand>
</feature>
<feature type="binding site" evidence="1">
    <location>
        <begin position="206"/>
        <end position="208"/>
    </location>
    <ligand>
        <name>ATP</name>
        <dbReference type="ChEBI" id="CHEBI:30616"/>
    </ligand>
</feature>
<feature type="binding site" evidence="1">
    <location>
        <position position="213"/>
    </location>
    <ligand>
        <name>ATP</name>
        <dbReference type="ChEBI" id="CHEBI:30616"/>
    </ligand>
</feature>
<reference key="1">
    <citation type="journal article" date="2010" name="J. Bacteriol.">
        <title>Whole genome sequences of two Xylella fastidiosa strains (M12 and M23) causing almond leaf scorch disease in California.</title>
        <authorList>
            <person name="Chen J."/>
            <person name="Xie G."/>
            <person name="Han S."/>
            <person name="Chertkov O."/>
            <person name="Sims D."/>
            <person name="Civerolo E.L."/>
        </authorList>
    </citation>
    <scope>NUCLEOTIDE SEQUENCE [LARGE SCALE GENOMIC DNA]</scope>
    <source>
        <strain>M12</strain>
    </source>
</reference>
<accession>B0U3W7</accession>
<evidence type="ECO:0000255" key="1">
    <source>
        <dbReference type="HAMAP-Rule" id="MF_00336"/>
    </source>
</evidence>
<comment type="function">
    <text evidence="1">Catalyzes a mechanistically unusual reaction, the ATP-dependent insertion of CO2 between the N7 and N8 nitrogen atoms of 7,8-diaminopelargonic acid (DAPA, also called 7,8-diammoniononanoate) to form a ureido ring.</text>
</comment>
<comment type="catalytic activity">
    <reaction evidence="1">
        <text>(7R,8S)-7,8-diammoniononanoate + CO2 + ATP = (4R,5S)-dethiobiotin + ADP + phosphate + 3 H(+)</text>
        <dbReference type="Rhea" id="RHEA:15805"/>
        <dbReference type="ChEBI" id="CHEBI:15378"/>
        <dbReference type="ChEBI" id="CHEBI:16526"/>
        <dbReference type="ChEBI" id="CHEBI:30616"/>
        <dbReference type="ChEBI" id="CHEBI:43474"/>
        <dbReference type="ChEBI" id="CHEBI:149469"/>
        <dbReference type="ChEBI" id="CHEBI:149473"/>
        <dbReference type="ChEBI" id="CHEBI:456216"/>
        <dbReference type="EC" id="6.3.3.3"/>
    </reaction>
</comment>
<comment type="cofactor">
    <cofactor evidence="1">
        <name>Mg(2+)</name>
        <dbReference type="ChEBI" id="CHEBI:18420"/>
    </cofactor>
</comment>
<comment type="pathway">
    <text evidence="1">Cofactor biosynthesis; biotin biosynthesis; biotin from 7,8-diaminononanoate: step 1/2.</text>
</comment>
<comment type="subunit">
    <text evidence="1">Homodimer.</text>
</comment>
<comment type="subcellular location">
    <subcellularLocation>
        <location evidence="1">Cytoplasm</location>
    </subcellularLocation>
</comment>
<comment type="similarity">
    <text evidence="1">Belongs to the dethiobiotin synthetase family.</text>
</comment>
<name>BIOD_XYLFM</name>
<sequence>MSLSAFYVTGTDTGIGKTFVSCILLHMLRGRGQRAVGMKPVASGCTYSDTGWRNEDALALQAASDPTPAYDLINPYALPAAVAPEIAAIEARVTVALEPLSASFTQLRAQADVVVVEGVGGWATPLNATIDQATLVRALEIPVVLVVGLRLGCMNHARLSTAAIMADGLRCIGWIANTIDPHMARIEENLALLRQRLPIPYWGHLPHIPPGINPATLATRLHPQGD</sequence>
<proteinExistence type="inferred from homology"/>
<dbReference type="EC" id="6.3.3.3" evidence="1"/>
<dbReference type="EMBL" id="CP000941">
    <property type="protein sequence ID" value="ACA12546.1"/>
    <property type="molecule type" value="Genomic_DNA"/>
</dbReference>
<dbReference type="RefSeq" id="WP_012338002.1">
    <property type="nucleotide sequence ID" value="NC_010513.1"/>
</dbReference>
<dbReference type="SMR" id="B0U3W7"/>
<dbReference type="KEGG" id="xfm:Xfasm12_1637"/>
<dbReference type="HOGENOM" id="CLU_072551_0_0_6"/>
<dbReference type="UniPathway" id="UPA00078">
    <property type="reaction ID" value="UER00161"/>
</dbReference>
<dbReference type="GO" id="GO:0005829">
    <property type="term" value="C:cytosol"/>
    <property type="evidence" value="ECO:0007669"/>
    <property type="project" value="TreeGrafter"/>
</dbReference>
<dbReference type="GO" id="GO:0005524">
    <property type="term" value="F:ATP binding"/>
    <property type="evidence" value="ECO:0007669"/>
    <property type="project" value="UniProtKB-UniRule"/>
</dbReference>
<dbReference type="GO" id="GO:0004141">
    <property type="term" value="F:dethiobiotin synthase activity"/>
    <property type="evidence" value="ECO:0007669"/>
    <property type="project" value="UniProtKB-UniRule"/>
</dbReference>
<dbReference type="GO" id="GO:0000287">
    <property type="term" value="F:magnesium ion binding"/>
    <property type="evidence" value="ECO:0007669"/>
    <property type="project" value="UniProtKB-UniRule"/>
</dbReference>
<dbReference type="GO" id="GO:0009102">
    <property type="term" value="P:biotin biosynthetic process"/>
    <property type="evidence" value="ECO:0007669"/>
    <property type="project" value="UniProtKB-UniRule"/>
</dbReference>
<dbReference type="CDD" id="cd03109">
    <property type="entry name" value="DTBS"/>
    <property type="match status" value="1"/>
</dbReference>
<dbReference type="FunFam" id="3.40.50.300:FF:000292">
    <property type="entry name" value="ATP-dependent dethiobiotin synthetase BioD"/>
    <property type="match status" value="1"/>
</dbReference>
<dbReference type="Gene3D" id="3.40.50.300">
    <property type="entry name" value="P-loop containing nucleotide triphosphate hydrolases"/>
    <property type="match status" value="1"/>
</dbReference>
<dbReference type="HAMAP" id="MF_00336">
    <property type="entry name" value="BioD"/>
    <property type="match status" value="1"/>
</dbReference>
<dbReference type="InterPro" id="IPR004472">
    <property type="entry name" value="DTB_synth_BioD"/>
</dbReference>
<dbReference type="InterPro" id="IPR027417">
    <property type="entry name" value="P-loop_NTPase"/>
</dbReference>
<dbReference type="NCBIfam" id="TIGR00347">
    <property type="entry name" value="bioD"/>
    <property type="match status" value="1"/>
</dbReference>
<dbReference type="PANTHER" id="PTHR43210">
    <property type="entry name" value="DETHIOBIOTIN SYNTHETASE"/>
    <property type="match status" value="1"/>
</dbReference>
<dbReference type="PANTHER" id="PTHR43210:SF5">
    <property type="entry name" value="DETHIOBIOTIN SYNTHETASE"/>
    <property type="match status" value="1"/>
</dbReference>
<dbReference type="Pfam" id="PF13500">
    <property type="entry name" value="AAA_26"/>
    <property type="match status" value="1"/>
</dbReference>
<dbReference type="PIRSF" id="PIRSF006755">
    <property type="entry name" value="DTB_synth"/>
    <property type="match status" value="1"/>
</dbReference>
<dbReference type="SUPFAM" id="SSF52540">
    <property type="entry name" value="P-loop containing nucleoside triphosphate hydrolases"/>
    <property type="match status" value="1"/>
</dbReference>
<keyword id="KW-0067">ATP-binding</keyword>
<keyword id="KW-0093">Biotin biosynthesis</keyword>
<keyword id="KW-0963">Cytoplasm</keyword>
<keyword id="KW-0436">Ligase</keyword>
<keyword id="KW-0460">Magnesium</keyword>
<keyword id="KW-0479">Metal-binding</keyword>
<keyword id="KW-0547">Nucleotide-binding</keyword>
<gene>
    <name evidence="1" type="primary">bioD</name>
    <name type="ordered locus">Xfasm12_1637</name>
</gene>
<protein>
    <recommendedName>
        <fullName evidence="1">ATP-dependent dethiobiotin synthetase BioD</fullName>
        <ecNumber evidence="1">6.3.3.3</ecNumber>
    </recommendedName>
    <alternativeName>
        <fullName evidence="1">DTB synthetase</fullName>
        <shortName evidence="1">DTBS</shortName>
    </alternativeName>
    <alternativeName>
        <fullName evidence="1">Dethiobiotin synthase</fullName>
    </alternativeName>
</protein>